<sequence>MIKIRLSRHGMKKKPFYQIIIANVRSSRNGKFIERVGFFNPFAKKNEEKIRISTKRIQYWLEKGAKKTNRIKNLLIQFKKISSNNIKI</sequence>
<protein>
    <recommendedName>
        <fullName evidence="1">Small ribosomal subunit protein bS16</fullName>
    </recommendedName>
    <alternativeName>
        <fullName evidence="2">30S ribosomal protein S16</fullName>
    </alternativeName>
</protein>
<proteinExistence type="inferred from homology"/>
<keyword id="KW-1185">Reference proteome</keyword>
<keyword id="KW-0687">Ribonucleoprotein</keyword>
<keyword id="KW-0689">Ribosomal protein</keyword>
<accession>Q057I5</accession>
<dbReference type="EMBL" id="CP000263">
    <property type="protein sequence ID" value="ABJ90714.1"/>
    <property type="molecule type" value="Genomic_DNA"/>
</dbReference>
<dbReference type="RefSeq" id="WP_011672633.1">
    <property type="nucleotide sequence ID" value="NC_008513.1"/>
</dbReference>
<dbReference type="SMR" id="Q057I5"/>
<dbReference type="STRING" id="372461.BCc_246"/>
<dbReference type="KEGG" id="bcc:BCc_246"/>
<dbReference type="eggNOG" id="COG0228">
    <property type="taxonomic scope" value="Bacteria"/>
</dbReference>
<dbReference type="HOGENOM" id="CLU_100590_5_1_6"/>
<dbReference type="OrthoDB" id="9807878at2"/>
<dbReference type="Proteomes" id="UP000000669">
    <property type="component" value="Chromosome"/>
</dbReference>
<dbReference type="GO" id="GO:0005737">
    <property type="term" value="C:cytoplasm"/>
    <property type="evidence" value="ECO:0007669"/>
    <property type="project" value="UniProtKB-ARBA"/>
</dbReference>
<dbReference type="GO" id="GO:0015935">
    <property type="term" value="C:small ribosomal subunit"/>
    <property type="evidence" value="ECO:0007669"/>
    <property type="project" value="TreeGrafter"/>
</dbReference>
<dbReference type="GO" id="GO:0003735">
    <property type="term" value="F:structural constituent of ribosome"/>
    <property type="evidence" value="ECO:0007669"/>
    <property type="project" value="InterPro"/>
</dbReference>
<dbReference type="GO" id="GO:0006412">
    <property type="term" value="P:translation"/>
    <property type="evidence" value="ECO:0007669"/>
    <property type="project" value="UniProtKB-UniRule"/>
</dbReference>
<dbReference type="Gene3D" id="3.30.1320.10">
    <property type="match status" value="1"/>
</dbReference>
<dbReference type="HAMAP" id="MF_00385">
    <property type="entry name" value="Ribosomal_bS16"/>
    <property type="match status" value="1"/>
</dbReference>
<dbReference type="InterPro" id="IPR000307">
    <property type="entry name" value="Ribosomal_bS16"/>
</dbReference>
<dbReference type="InterPro" id="IPR023803">
    <property type="entry name" value="Ribosomal_bS16_dom_sf"/>
</dbReference>
<dbReference type="NCBIfam" id="TIGR00002">
    <property type="entry name" value="S16"/>
    <property type="match status" value="1"/>
</dbReference>
<dbReference type="PANTHER" id="PTHR12919">
    <property type="entry name" value="30S RIBOSOMAL PROTEIN S16"/>
    <property type="match status" value="1"/>
</dbReference>
<dbReference type="PANTHER" id="PTHR12919:SF20">
    <property type="entry name" value="SMALL RIBOSOMAL SUBUNIT PROTEIN BS16M"/>
    <property type="match status" value="1"/>
</dbReference>
<dbReference type="Pfam" id="PF00886">
    <property type="entry name" value="Ribosomal_S16"/>
    <property type="match status" value="1"/>
</dbReference>
<dbReference type="SUPFAM" id="SSF54565">
    <property type="entry name" value="Ribosomal protein S16"/>
    <property type="match status" value="1"/>
</dbReference>
<gene>
    <name evidence="1" type="primary">rpsP</name>
    <name type="ordered locus">BCc_246</name>
</gene>
<reference key="1">
    <citation type="journal article" date="2006" name="Science">
        <title>A small microbial genome: the end of a long symbiotic relationship?</title>
        <authorList>
            <person name="Perez-Brocal V."/>
            <person name="Gil R."/>
            <person name="Ramos S."/>
            <person name="Lamelas A."/>
            <person name="Postigo M."/>
            <person name="Michelena J.M."/>
            <person name="Silva F.J."/>
            <person name="Moya A."/>
            <person name="Latorre A."/>
        </authorList>
    </citation>
    <scope>NUCLEOTIDE SEQUENCE [LARGE SCALE GENOMIC DNA]</scope>
    <source>
        <strain>Cc</strain>
    </source>
</reference>
<name>RS16_BUCCC</name>
<organism>
    <name type="scientific">Buchnera aphidicola subsp. Cinara cedri (strain Cc)</name>
    <dbReference type="NCBI Taxonomy" id="372461"/>
    <lineage>
        <taxon>Bacteria</taxon>
        <taxon>Pseudomonadati</taxon>
        <taxon>Pseudomonadota</taxon>
        <taxon>Gammaproteobacteria</taxon>
        <taxon>Enterobacterales</taxon>
        <taxon>Erwiniaceae</taxon>
        <taxon>Buchnera</taxon>
    </lineage>
</organism>
<feature type="chain" id="PRO_1000049222" description="Small ribosomal subunit protein bS16">
    <location>
        <begin position="1"/>
        <end position="88"/>
    </location>
</feature>
<comment type="similarity">
    <text evidence="1">Belongs to the bacterial ribosomal protein bS16 family.</text>
</comment>
<evidence type="ECO:0000255" key="1">
    <source>
        <dbReference type="HAMAP-Rule" id="MF_00385"/>
    </source>
</evidence>
<evidence type="ECO:0000305" key="2"/>